<evidence type="ECO:0000255" key="1">
    <source>
        <dbReference type="HAMAP-Rule" id="MF_00382"/>
    </source>
</evidence>
<evidence type="ECO:0000305" key="2"/>
<proteinExistence type="inferred from homology"/>
<gene>
    <name evidence="1" type="primary">rplT</name>
    <name type="ordered locus">Shewmr7_2018</name>
</gene>
<name>RL20_SHESR</name>
<sequence>MPRVKRGVTARARHKKVLKLAKGYYGARSRTYRVAVQAVTKAGQYAYRDRRQKKRQFRQLWIARINAAARQNGLSYSRFINGLKKASIEIDRKILADIAVFDKVVFATLVEKAKEALN</sequence>
<organism>
    <name type="scientific">Shewanella sp. (strain MR-7)</name>
    <dbReference type="NCBI Taxonomy" id="60481"/>
    <lineage>
        <taxon>Bacteria</taxon>
        <taxon>Pseudomonadati</taxon>
        <taxon>Pseudomonadota</taxon>
        <taxon>Gammaproteobacteria</taxon>
        <taxon>Alteromonadales</taxon>
        <taxon>Shewanellaceae</taxon>
        <taxon>Shewanella</taxon>
    </lineage>
</organism>
<protein>
    <recommendedName>
        <fullName evidence="1">Large ribosomal subunit protein bL20</fullName>
    </recommendedName>
    <alternativeName>
        <fullName evidence="2">50S ribosomal protein L20</fullName>
    </alternativeName>
</protein>
<keyword id="KW-0687">Ribonucleoprotein</keyword>
<keyword id="KW-0689">Ribosomal protein</keyword>
<keyword id="KW-0694">RNA-binding</keyword>
<keyword id="KW-0699">rRNA-binding</keyword>
<comment type="function">
    <text evidence="1">Binds directly to 23S ribosomal RNA and is necessary for the in vitro assembly process of the 50S ribosomal subunit. It is not involved in the protein synthesizing functions of that subunit.</text>
</comment>
<comment type="similarity">
    <text evidence="1">Belongs to the bacterial ribosomal protein bL20 family.</text>
</comment>
<dbReference type="EMBL" id="CP000444">
    <property type="protein sequence ID" value="ABI43007.1"/>
    <property type="molecule type" value="Genomic_DNA"/>
</dbReference>
<dbReference type="SMR" id="Q0HV48"/>
<dbReference type="KEGG" id="shm:Shewmr7_2018"/>
<dbReference type="HOGENOM" id="CLU_123265_0_1_6"/>
<dbReference type="GO" id="GO:1990904">
    <property type="term" value="C:ribonucleoprotein complex"/>
    <property type="evidence" value="ECO:0007669"/>
    <property type="project" value="UniProtKB-KW"/>
</dbReference>
<dbReference type="GO" id="GO:0005840">
    <property type="term" value="C:ribosome"/>
    <property type="evidence" value="ECO:0007669"/>
    <property type="project" value="UniProtKB-KW"/>
</dbReference>
<dbReference type="GO" id="GO:0019843">
    <property type="term" value="F:rRNA binding"/>
    <property type="evidence" value="ECO:0007669"/>
    <property type="project" value="UniProtKB-UniRule"/>
</dbReference>
<dbReference type="GO" id="GO:0003735">
    <property type="term" value="F:structural constituent of ribosome"/>
    <property type="evidence" value="ECO:0007669"/>
    <property type="project" value="InterPro"/>
</dbReference>
<dbReference type="GO" id="GO:0000027">
    <property type="term" value="P:ribosomal large subunit assembly"/>
    <property type="evidence" value="ECO:0007669"/>
    <property type="project" value="UniProtKB-UniRule"/>
</dbReference>
<dbReference type="GO" id="GO:0006412">
    <property type="term" value="P:translation"/>
    <property type="evidence" value="ECO:0007669"/>
    <property type="project" value="InterPro"/>
</dbReference>
<dbReference type="CDD" id="cd07026">
    <property type="entry name" value="Ribosomal_L20"/>
    <property type="match status" value="1"/>
</dbReference>
<dbReference type="FunFam" id="1.10.1900.20:FF:000001">
    <property type="entry name" value="50S ribosomal protein L20"/>
    <property type="match status" value="1"/>
</dbReference>
<dbReference type="Gene3D" id="6.10.160.10">
    <property type="match status" value="1"/>
</dbReference>
<dbReference type="Gene3D" id="1.10.1900.20">
    <property type="entry name" value="Ribosomal protein L20"/>
    <property type="match status" value="1"/>
</dbReference>
<dbReference type="HAMAP" id="MF_00382">
    <property type="entry name" value="Ribosomal_bL20"/>
    <property type="match status" value="1"/>
</dbReference>
<dbReference type="InterPro" id="IPR005813">
    <property type="entry name" value="Ribosomal_bL20"/>
</dbReference>
<dbReference type="InterPro" id="IPR049946">
    <property type="entry name" value="RIBOSOMAL_L20_CS"/>
</dbReference>
<dbReference type="InterPro" id="IPR035566">
    <property type="entry name" value="Ribosomal_protein_bL20_C"/>
</dbReference>
<dbReference type="NCBIfam" id="TIGR01032">
    <property type="entry name" value="rplT_bact"/>
    <property type="match status" value="1"/>
</dbReference>
<dbReference type="PANTHER" id="PTHR10986">
    <property type="entry name" value="39S RIBOSOMAL PROTEIN L20"/>
    <property type="match status" value="1"/>
</dbReference>
<dbReference type="Pfam" id="PF00453">
    <property type="entry name" value="Ribosomal_L20"/>
    <property type="match status" value="1"/>
</dbReference>
<dbReference type="PRINTS" id="PR00062">
    <property type="entry name" value="RIBOSOMALL20"/>
</dbReference>
<dbReference type="SUPFAM" id="SSF74731">
    <property type="entry name" value="Ribosomal protein L20"/>
    <property type="match status" value="1"/>
</dbReference>
<dbReference type="PROSITE" id="PS00937">
    <property type="entry name" value="RIBOSOMAL_L20"/>
    <property type="match status" value="1"/>
</dbReference>
<reference key="1">
    <citation type="submission" date="2006-08" db="EMBL/GenBank/DDBJ databases">
        <title>Complete sequence of chromosome 1 of Shewanella sp. MR-7.</title>
        <authorList>
            <person name="Copeland A."/>
            <person name="Lucas S."/>
            <person name="Lapidus A."/>
            <person name="Barry K."/>
            <person name="Detter J.C."/>
            <person name="Glavina del Rio T."/>
            <person name="Hammon N."/>
            <person name="Israni S."/>
            <person name="Dalin E."/>
            <person name="Tice H."/>
            <person name="Pitluck S."/>
            <person name="Kiss H."/>
            <person name="Brettin T."/>
            <person name="Bruce D."/>
            <person name="Han C."/>
            <person name="Tapia R."/>
            <person name="Gilna P."/>
            <person name="Schmutz J."/>
            <person name="Larimer F."/>
            <person name="Land M."/>
            <person name="Hauser L."/>
            <person name="Kyrpides N."/>
            <person name="Mikhailova N."/>
            <person name="Nealson K."/>
            <person name="Konstantinidis K."/>
            <person name="Klappenbach J."/>
            <person name="Tiedje J."/>
            <person name="Richardson P."/>
        </authorList>
    </citation>
    <scope>NUCLEOTIDE SEQUENCE [LARGE SCALE GENOMIC DNA]</scope>
    <source>
        <strain>MR-7</strain>
    </source>
</reference>
<feature type="chain" id="PRO_1000049072" description="Large ribosomal subunit protein bL20">
    <location>
        <begin position="1"/>
        <end position="118"/>
    </location>
</feature>
<accession>Q0HV48</accession>